<reference key="1">
    <citation type="journal article" date="2004" name="Nat. Genet.">
        <title>Complete sequencing and characterization of 21,243 full-length human cDNAs.</title>
        <authorList>
            <person name="Ota T."/>
            <person name="Suzuki Y."/>
            <person name="Nishikawa T."/>
            <person name="Otsuki T."/>
            <person name="Sugiyama T."/>
            <person name="Irie R."/>
            <person name="Wakamatsu A."/>
            <person name="Hayashi K."/>
            <person name="Sato H."/>
            <person name="Nagai K."/>
            <person name="Kimura K."/>
            <person name="Makita H."/>
            <person name="Sekine M."/>
            <person name="Obayashi M."/>
            <person name="Nishi T."/>
            <person name="Shibahara T."/>
            <person name="Tanaka T."/>
            <person name="Ishii S."/>
            <person name="Yamamoto J."/>
            <person name="Saito K."/>
            <person name="Kawai Y."/>
            <person name="Isono Y."/>
            <person name="Nakamura Y."/>
            <person name="Nagahari K."/>
            <person name="Murakami K."/>
            <person name="Yasuda T."/>
            <person name="Iwayanagi T."/>
            <person name="Wagatsuma M."/>
            <person name="Shiratori A."/>
            <person name="Sudo H."/>
            <person name="Hosoiri T."/>
            <person name="Kaku Y."/>
            <person name="Kodaira H."/>
            <person name="Kondo H."/>
            <person name="Sugawara M."/>
            <person name="Takahashi M."/>
            <person name="Kanda K."/>
            <person name="Yokoi T."/>
            <person name="Furuya T."/>
            <person name="Kikkawa E."/>
            <person name="Omura Y."/>
            <person name="Abe K."/>
            <person name="Kamihara K."/>
            <person name="Katsuta N."/>
            <person name="Sato K."/>
            <person name="Tanikawa M."/>
            <person name="Yamazaki M."/>
            <person name="Ninomiya K."/>
            <person name="Ishibashi T."/>
            <person name="Yamashita H."/>
            <person name="Murakawa K."/>
            <person name="Fujimori K."/>
            <person name="Tanai H."/>
            <person name="Kimata M."/>
            <person name="Watanabe M."/>
            <person name="Hiraoka S."/>
            <person name="Chiba Y."/>
            <person name="Ishida S."/>
            <person name="Ono Y."/>
            <person name="Takiguchi S."/>
            <person name="Watanabe S."/>
            <person name="Yosida M."/>
            <person name="Hotuta T."/>
            <person name="Kusano J."/>
            <person name="Kanehori K."/>
            <person name="Takahashi-Fujii A."/>
            <person name="Hara H."/>
            <person name="Tanase T.-O."/>
            <person name="Nomura Y."/>
            <person name="Togiya S."/>
            <person name="Komai F."/>
            <person name="Hara R."/>
            <person name="Takeuchi K."/>
            <person name="Arita M."/>
            <person name="Imose N."/>
            <person name="Musashino K."/>
            <person name="Yuuki H."/>
            <person name="Oshima A."/>
            <person name="Sasaki N."/>
            <person name="Aotsuka S."/>
            <person name="Yoshikawa Y."/>
            <person name="Matsunawa H."/>
            <person name="Ichihara T."/>
            <person name="Shiohata N."/>
            <person name="Sano S."/>
            <person name="Moriya S."/>
            <person name="Momiyama H."/>
            <person name="Satoh N."/>
            <person name="Takami S."/>
            <person name="Terashima Y."/>
            <person name="Suzuki O."/>
            <person name="Nakagawa S."/>
            <person name="Senoh A."/>
            <person name="Mizoguchi H."/>
            <person name="Goto Y."/>
            <person name="Shimizu F."/>
            <person name="Wakebe H."/>
            <person name="Hishigaki H."/>
            <person name="Watanabe T."/>
            <person name="Sugiyama A."/>
            <person name="Takemoto M."/>
            <person name="Kawakami B."/>
            <person name="Yamazaki M."/>
            <person name="Watanabe K."/>
            <person name="Kumagai A."/>
            <person name="Itakura S."/>
            <person name="Fukuzumi Y."/>
            <person name="Fujimori Y."/>
            <person name="Komiyama M."/>
            <person name="Tashiro H."/>
            <person name="Tanigami A."/>
            <person name="Fujiwara T."/>
            <person name="Ono T."/>
            <person name="Yamada K."/>
            <person name="Fujii Y."/>
            <person name="Ozaki K."/>
            <person name="Hirao M."/>
            <person name="Ohmori Y."/>
            <person name="Kawabata A."/>
            <person name="Hikiji T."/>
            <person name="Kobatake N."/>
            <person name="Inagaki H."/>
            <person name="Ikema Y."/>
            <person name="Okamoto S."/>
            <person name="Okitani R."/>
            <person name="Kawakami T."/>
            <person name="Noguchi S."/>
            <person name="Itoh T."/>
            <person name="Shigeta K."/>
            <person name="Senba T."/>
            <person name="Matsumura K."/>
            <person name="Nakajima Y."/>
            <person name="Mizuno T."/>
            <person name="Morinaga M."/>
            <person name="Sasaki M."/>
            <person name="Togashi T."/>
            <person name="Oyama M."/>
            <person name="Hata H."/>
            <person name="Watanabe M."/>
            <person name="Komatsu T."/>
            <person name="Mizushima-Sugano J."/>
            <person name="Satoh T."/>
            <person name="Shirai Y."/>
            <person name="Takahashi Y."/>
            <person name="Nakagawa K."/>
            <person name="Okumura K."/>
            <person name="Nagase T."/>
            <person name="Nomura N."/>
            <person name="Kikuchi H."/>
            <person name="Masuho Y."/>
            <person name="Yamashita R."/>
            <person name="Nakai K."/>
            <person name="Yada T."/>
            <person name="Nakamura Y."/>
            <person name="Ohara O."/>
            <person name="Isogai T."/>
            <person name="Sugano S."/>
        </authorList>
    </citation>
    <scope>NUCLEOTIDE SEQUENCE [LARGE SCALE MRNA]</scope>
    <source>
        <tissue>Fetal brain</tissue>
    </source>
</reference>
<evidence type="ECO:0000305" key="1"/>
<name>YG039_HUMAN</name>
<proteinExistence type="uncertain"/>
<feature type="chain" id="PRO_0000341212" description="Putative uncharacterized protein FLJ38264">
    <location>
        <begin position="1"/>
        <end position="141"/>
    </location>
</feature>
<protein>
    <recommendedName>
        <fullName>Putative uncharacterized protein FLJ38264</fullName>
    </recommendedName>
</protein>
<dbReference type="EMBL" id="AK095583">
    <property type="status" value="NOT_ANNOTATED_CDS"/>
    <property type="molecule type" value="mRNA"/>
</dbReference>
<dbReference type="BioMuta" id="-"/>
<dbReference type="MassIVE" id="Q8N976"/>
<dbReference type="PeptideAtlas" id="Q8N976"/>
<dbReference type="AGR" id="HGNC:37073"/>
<dbReference type="neXtProt" id="NX_Q8N976"/>
<dbReference type="InParanoid" id="Q8N976"/>
<dbReference type="PAN-GO" id="Q8N976">
    <property type="GO annotations" value="0 GO annotations based on evolutionary models"/>
</dbReference>
<dbReference type="PhylomeDB" id="Q8N976"/>
<dbReference type="Pharos" id="Q8N976">
    <property type="development level" value="Tdark"/>
</dbReference>
<dbReference type="Proteomes" id="UP000005640">
    <property type="component" value="Unplaced"/>
</dbReference>
<dbReference type="RNAct" id="Q8N976">
    <property type="molecule type" value="protein"/>
</dbReference>
<dbReference type="PANTHER" id="PTHR12138:SF156">
    <property type="entry name" value="LMO7 DOWNSTREAM NEIGHBOR PROTEIN"/>
    <property type="match status" value="1"/>
</dbReference>
<dbReference type="PANTHER" id="PTHR12138">
    <property type="entry name" value="PRIMATE-EXPANDED PROTEIN FAMILY"/>
    <property type="match status" value="1"/>
</dbReference>
<dbReference type="PRINTS" id="PR02045">
    <property type="entry name" value="F138DOMAIN"/>
</dbReference>
<comment type="caution">
    <text evidence="1">Product of a dubious CDS prediction.</text>
</comment>
<organism>
    <name type="scientific">Homo sapiens</name>
    <name type="common">Human</name>
    <dbReference type="NCBI Taxonomy" id="9606"/>
    <lineage>
        <taxon>Eukaryota</taxon>
        <taxon>Metazoa</taxon>
        <taxon>Chordata</taxon>
        <taxon>Craniata</taxon>
        <taxon>Vertebrata</taxon>
        <taxon>Euteleostomi</taxon>
        <taxon>Mammalia</taxon>
        <taxon>Eutheria</taxon>
        <taxon>Euarchontoglires</taxon>
        <taxon>Primates</taxon>
        <taxon>Haplorrhini</taxon>
        <taxon>Catarrhini</taxon>
        <taxon>Hominidae</taxon>
        <taxon>Homo</taxon>
    </lineage>
</organism>
<accession>Q8N976</accession>
<sequence length="141" mass="14881">MISAHCSNLHFLGSSESPTLASQVGEITGTHHHTRLIFVFLVETGFHHVGHAGLELLTSSDPPTLASRSAGITGMSHRARPHGISRGEQVTLGLPLELLECVSWPLCGSPLRRAQIVSTPPSPLAALRVPVGAEGWGGTEQ</sequence>
<keyword id="KW-1185">Reference proteome</keyword>